<sequence length="166" mass="18274">MNKEQKKNYISEMETQFQNNEAVMVTHYQGLTMSQLDELRAQMREHGIKFTITKNRITKIALEKTKCKELSNLFTGATAVAFSNDAIISARILSKFAKTNESLKLLGGIMGNEVLDQAAVQNVANLPTLDEARANLVGILATPASKLVSILLARSEKMSSLSPENS</sequence>
<keyword id="KW-1185">Reference proteome</keyword>
<keyword id="KW-0687">Ribonucleoprotein</keyword>
<keyword id="KW-0689">Ribosomal protein</keyword>
<keyword id="KW-0694">RNA-binding</keyword>
<keyword id="KW-0699">rRNA-binding</keyword>
<accession>Q4FLL0</accession>
<proteinExistence type="inferred from homology"/>
<evidence type="ECO:0000255" key="1">
    <source>
        <dbReference type="HAMAP-Rule" id="MF_00362"/>
    </source>
</evidence>
<evidence type="ECO:0000305" key="2"/>
<feature type="chain" id="PRO_0000234867" description="Large ribosomal subunit protein uL10">
    <location>
        <begin position="1"/>
        <end position="166"/>
    </location>
</feature>
<protein>
    <recommendedName>
        <fullName evidence="1">Large ribosomal subunit protein uL10</fullName>
    </recommendedName>
    <alternativeName>
        <fullName evidence="2">50S ribosomal protein L10</fullName>
    </alternativeName>
</protein>
<gene>
    <name evidence="1" type="primary">rplJ</name>
    <name type="ordered locus">SAR11_1125</name>
</gene>
<name>RL10_PELUB</name>
<comment type="function">
    <text evidence="1">Forms part of the ribosomal stalk, playing a central role in the interaction of the ribosome with GTP-bound translation factors.</text>
</comment>
<comment type="subunit">
    <text evidence="1">Part of the ribosomal stalk of the 50S ribosomal subunit. The N-terminus interacts with L11 and the large rRNA to form the base of the stalk. The C-terminus forms an elongated spine to which L12 dimers bind in a sequential fashion forming a multimeric L10(L12)X complex.</text>
</comment>
<comment type="similarity">
    <text evidence="1">Belongs to the universal ribosomal protein uL10 family.</text>
</comment>
<reference key="1">
    <citation type="journal article" date="2005" name="Science">
        <title>Genome streamlining in a cosmopolitan oceanic bacterium.</title>
        <authorList>
            <person name="Giovannoni S.J."/>
            <person name="Tripp H.J."/>
            <person name="Givan S."/>
            <person name="Podar M."/>
            <person name="Vergin K.L."/>
            <person name="Baptista D."/>
            <person name="Bibbs L."/>
            <person name="Eads J."/>
            <person name="Richardson T.H."/>
            <person name="Noordewier M."/>
            <person name="Rappe M.S."/>
            <person name="Short J.M."/>
            <person name="Carrington J.C."/>
            <person name="Mathur E.J."/>
        </authorList>
    </citation>
    <scope>NUCLEOTIDE SEQUENCE [LARGE SCALE GENOMIC DNA]</scope>
    <source>
        <strain>HTCC1062</strain>
    </source>
</reference>
<organism>
    <name type="scientific">Pelagibacter ubique (strain HTCC1062)</name>
    <dbReference type="NCBI Taxonomy" id="335992"/>
    <lineage>
        <taxon>Bacteria</taxon>
        <taxon>Pseudomonadati</taxon>
        <taxon>Pseudomonadota</taxon>
        <taxon>Alphaproteobacteria</taxon>
        <taxon>Candidatus Pelagibacterales</taxon>
        <taxon>Candidatus Pelagibacteraceae</taxon>
        <taxon>Candidatus Pelagibacter</taxon>
    </lineage>
</organism>
<dbReference type="EMBL" id="CP000084">
    <property type="protein sequence ID" value="AAZ21928.1"/>
    <property type="molecule type" value="Genomic_DNA"/>
</dbReference>
<dbReference type="RefSeq" id="WP_006996803.1">
    <property type="nucleotide sequence ID" value="NC_007205.1"/>
</dbReference>
<dbReference type="SMR" id="Q4FLL0"/>
<dbReference type="STRING" id="335992.SAR11_1125"/>
<dbReference type="GeneID" id="66295614"/>
<dbReference type="KEGG" id="pub:SAR11_1125"/>
<dbReference type="eggNOG" id="COG0244">
    <property type="taxonomic scope" value="Bacteria"/>
</dbReference>
<dbReference type="HOGENOM" id="CLU_092227_0_0_5"/>
<dbReference type="OrthoDB" id="9791972at2"/>
<dbReference type="Proteomes" id="UP000002528">
    <property type="component" value="Chromosome"/>
</dbReference>
<dbReference type="GO" id="GO:1990904">
    <property type="term" value="C:ribonucleoprotein complex"/>
    <property type="evidence" value="ECO:0007669"/>
    <property type="project" value="UniProtKB-KW"/>
</dbReference>
<dbReference type="GO" id="GO:0005840">
    <property type="term" value="C:ribosome"/>
    <property type="evidence" value="ECO:0007669"/>
    <property type="project" value="UniProtKB-KW"/>
</dbReference>
<dbReference type="GO" id="GO:0070180">
    <property type="term" value="F:large ribosomal subunit rRNA binding"/>
    <property type="evidence" value="ECO:0007669"/>
    <property type="project" value="UniProtKB-UniRule"/>
</dbReference>
<dbReference type="GO" id="GO:0006412">
    <property type="term" value="P:translation"/>
    <property type="evidence" value="ECO:0007669"/>
    <property type="project" value="UniProtKB-UniRule"/>
</dbReference>
<dbReference type="CDD" id="cd05797">
    <property type="entry name" value="Ribosomal_L10"/>
    <property type="match status" value="1"/>
</dbReference>
<dbReference type="Gene3D" id="3.30.70.1730">
    <property type="match status" value="1"/>
</dbReference>
<dbReference type="HAMAP" id="MF_00362">
    <property type="entry name" value="Ribosomal_uL10"/>
    <property type="match status" value="1"/>
</dbReference>
<dbReference type="InterPro" id="IPR001790">
    <property type="entry name" value="Ribosomal_uL10"/>
</dbReference>
<dbReference type="InterPro" id="IPR043141">
    <property type="entry name" value="Ribosomal_uL10-like_sf"/>
</dbReference>
<dbReference type="InterPro" id="IPR022973">
    <property type="entry name" value="Ribosomal_uL10_bac"/>
</dbReference>
<dbReference type="InterPro" id="IPR047865">
    <property type="entry name" value="Ribosomal_uL10_bac_type"/>
</dbReference>
<dbReference type="NCBIfam" id="NF000955">
    <property type="entry name" value="PRK00099.1-1"/>
    <property type="match status" value="1"/>
</dbReference>
<dbReference type="PANTHER" id="PTHR11560">
    <property type="entry name" value="39S RIBOSOMAL PROTEIN L10, MITOCHONDRIAL"/>
    <property type="match status" value="1"/>
</dbReference>
<dbReference type="Pfam" id="PF00466">
    <property type="entry name" value="Ribosomal_L10"/>
    <property type="match status" value="1"/>
</dbReference>
<dbReference type="SUPFAM" id="SSF160369">
    <property type="entry name" value="Ribosomal protein L10-like"/>
    <property type="match status" value="1"/>
</dbReference>